<comment type="function">
    <text evidence="1">Activates KDO (a required 8-carbon sugar) for incorporation into bacterial lipopolysaccharide in Gram-negative bacteria.</text>
</comment>
<comment type="catalytic activity">
    <reaction evidence="1">
        <text>3-deoxy-alpha-D-manno-oct-2-ulosonate + CTP = CMP-3-deoxy-beta-D-manno-octulosonate + diphosphate</text>
        <dbReference type="Rhea" id="RHEA:23448"/>
        <dbReference type="ChEBI" id="CHEBI:33019"/>
        <dbReference type="ChEBI" id="CHEBI:37563"/>
        <dbReference type="ChEBI" id="CHEBI:85986"/>
        <dbReference type="ChEBI" id="CHEBI:85987"/>
        <dbReference type="EC" id="2.7.7.38"/>
    </reaction>
</comment>
<comment type="pathway">
    <text evidence="1">Nucleotide-sugar biosynthesis; CMP-3-deoxy-D-manno-octulosonate biosynthesis; CMP-3-deoxy-D-manno-octulosonate from 3-deoxy-D-manno-octulosonate and CTP: step 1/1.</text>
</comment>
<comment type="pathway">
    <text evidence="1">Bacterial outer membrane biogenesis; lipopolysaccharide biosynthesis.</text>
</comment>
<comment type="subcellular location">
    <subcellularLocation>
        <location evidence="1">Cytoplasm</location>
    </subcellularLocation>
</comment>
<comment type="similarity">
    <text evidence="1">Belongs to the KdsB family.</text>
</comment>
<proteinExistence type="inferred from homology"/>
<keyword id="KW-0963">Cytoplasm</keyword>
<keyword id="KW-0448">Lipopolysaccharide biosynthesis</keyword>
<keyword id="KW-0548">Nucleotidyltransferase</keyword>
<keyword id="KW-0808">Transferase</keyword>
<protein>
    <recommendedName>
        <fullName evidence="1">3-deoxy-manno-octulosonate cytidylyltransferase</fullName>
        <ecNumber evidence="1">2.7.7.38</ecNumber>
    </recommendedName>
    <alternativeName>
        <fullName evidence="1">CMP-2-keto-3-deoxyoctulosonic acid synthase</fullName>
        <shortName evidence="1">CKS</shortName>
        <shortName evidence="1">CMP-KDO synthase</shortName>
    </alternativeName>
</protein>
<feature type="chain" id="PRO_1000003360" description="3-deoxy-manno-octulosonate cytidylyltransferase">
    <location>
        <begin position="1"/>
        <end position="254"/>
    </location>
</feature>
<name>KDSB_HAEI8</name>
<organism>
    <name type="scientific">Haemophilus influenzae (strain 86-028NP)</name>
    <dbReference type="NCBI Taxonomy" id="281310"/>
    <lineage>
        <taxon>Bacteria</taxon>
        <taxon>Pseudomonadati</taxon>
        <taxon>Pseudomonadota</taxon>
        <taxon>Gammaproteobacteria</taxon>
        <taxon>Pasteurellales</taxon>
        <taxon>Pasteurellaceae</taxon>
        <taxon>Haemophilus</taxon>
    </lineage>
</organism>
<reference key="1">
    <citation type="journal article" date="2005" name="J. Bacteriol.">
        <title>Genomic sequence of an otitis media isolate of nontypeable Haemophilus influenzae: comparative study with H. influenzae serotype d, strain KW20.</title>
        <authorList>
            <person name="Harrison A."/>
            <person name="Dyer D.W."/>
            <person name="Gillaspy A."/>
            <person name="Ray W.C."/>
            <person name="Mungur R."/>
            <person name="Carson M.B."/>
            <person name="Zhong H."/>
            <person name="Gipson J."/>
            <person name="Gipson M."/>
            <person name="Johnson L.S."/>
            <person name="Lewis L."/>
            <person name="Bakaletz L.O."/>
            <person name="Munson R.S. Jr."/>
        </authorList>
    </citation>
    <scope>NUCLEOTIDE SEQUENCE [LARGE SCALE GENOMIC DNA]</scope>
    <source>
        <strain>86-028NP</strain>
    </source>
</reference>
<accession>Q4QPI6</accession>
<dbReference type="EC" id="2.7.7.38" evidence="1"/>
<dbReference type="EMBL" id="CP000057">
    <property type="protein sequence ID" value="AAX87061.1"/>
    <property type="molecule type" value="Genomic_DNA"/>
</dbReference>
<dbReference type="RefSeq" id="WP_005663240.1">
    <property type="nucleotide sequence ID" value="NC_007146.2"/>
</dbReference>
<dbReference type="SMR" id="Q4QPI6"/>
<dbReference type="KEGG" id="hit:NTHI0068"/>
<dbReference type="HOGENOM" id="CLU_065038_1_0_6"/>
<dbReference type="UniPathway" id="UPA00030"/>
<dbReference type="UniPathway" id="UPA00358">
    <property type="reaction ID" value="UER00476"/>
</dbReference>
<dbReference type="Proteomes" id="UP000002525">
    <property type="component" value="Chromosome"/>
</dbReference>
<dbReference type="GO" id="GO:0005829">
    <property type="term" value="C:cytosol"/>
    <property type="evidence" value="ECO:0007669"/>
    <property type="project" value="TreeGrafter"/>
</dbReference>
<dbReference type="GO" id="GO:0008690">
    <property type="term" value="F:3-deoxy-manno-octulosonate cytidylyltransferase activity"/>
    <property type="evidence" value="ECO:0007669"/>
    <property type="project" value="UniProtKB-UniRule"/>
</dbReference>
<dbReference type="GO" id="GO:0033468">
    <property type="term" value="P:CMP-keto-3-deoxy-D-manno-octulosonic acid biosynthetic process"/>
    <property type="evidence" value="ECO:0007669"/>
    <property type="project" value="UniProtKB-UniRule"/>
</dbReference>
<dbReference type="GO" id="GO:0009103">
    <property type="term" value="P:lipopolysaccharide biosynthetic process"/>
    <property type="evidence" value="ECO:0007669"/>
    <property type="project" value="UniProtKB-UniRule"/>
</dbReference>
<dbReference type="CDD" id="cd02517">
    <property type="entry name" value="CMP-KDO-Synthetase"/>
    <property type="match status" value="1"/>
</dbReference>
<dbReference type="FunFam" id="3.90.550.10:FF:000011">
    <property type="entry name" value="3-deoxy-manno-octulosonate cytidylyltransferase"/>
    <property type="match status" value="1"/>
</dbReference>
<dbReference type="Gene3D" id="3.90.550.10">
    <property type="entry name" value="Spore Coat Polysaccharide Biosynthesis Protein SpsA, Chain A"/>
    <property type="match status" value="1"/>
</dbReference>
<dbReference type="HAMAP" id="MF_00057">
    <property type="entry name" value="KdsB"/>
    <property type="match status" value="1"/>
</dbReference>
<dbReference type="InterPro" id="IPR003329">
    <property type="entry name" value="Cytidylyl_trans"/>
</dbReference>
<dbReference type="InterPro" id="IPR004528">
    <property type="entry name" value="KdsB"/>
</dbReference>
<dbReference type="InterPro" id="IPR029044">
    <property type="entry name" value="Nucleotide-diphossugar_trans"/>
</dbReference>
<dbReference type="NCBIfam" id="TIGR00466">
    <property type="entry name" value="kdsB"/>
    <property type="match status" value="1"/>
</dbReference>
<dbReference type="NCBIfam" id="NF003950">
    <property type="entry name" value="PRK05450.1-3"/>
    <property type="match status" value="1"/>
</dbReference>
<dbReference type="NCBIfam" id="NF003952">
    <property type="entry name" value="PRK05450.1-5"/>
    <property type="match status" value="1"/>
</dbReference>
<dbReference type="NCBIfam" id="NF009905">
    <property type="entry name" value="PRK13368.1"/>
    <property type="match status" value="1"/>
</dbReference>
<dbReference type="PANTHER" id="PTHR42866">
    <property type="entry name" value="3-DEOXY-MANNO-OCTULOSONATE CYTIDYLYLTRANSFERASE"/>
    <property type="match status" value="1"/>
</dbReference>
<dbReference type="PANTHER" id="PTHR42866:SF2">
    <property type="entry name" value="3-DEOXY-MANNO-OCTULOSONATE CYTIDYLYLTRANSFERASE, MITOCHONDRIAL"/>
    <property type="match status" value="1"/>
</dbReference>
<dbReference type="Pfam" id="PF02348">
    <property type="entry name" value="CTP_transf_3"/>
    <property type="match status" value="1"/>
</dbReference>
<dbReference type="SUPFAM" id="SSF53448">
    <property type="entry name" value="Nucleotide-diphospho-sugar transferases"/>
    <property type="match status" value="1"/>
</dbReference>
<evidence type="ECO:0000255" key="1">
    <source>
        <dbReference type="HAMAP-Rule" id="MF_00057"/>
    </source>
</evidence>
<sequence length="254" mass="28236">MSFTVIIPARFASSRLPGKPLADIAGKPMIQHVFEKALQSGANRVIIATDNENVADVAKNFGAEVCMTSVNHNSGTERLAEVVEKLAIPDNEIIVNIQGDEPLIPPVIVRQVADNLAKFNVNMASLAVKIHDAEELFNPNAVKVLTDKDGYVLYFSRSVIPYDRDQFMNLQDVQKVQLADAYLRHIGIYAYRAGFIKQYVQWAPTQLENLEKLEQLRVLYNGERIHVELAKEVPAVGVDTAEDLEKVRAILAAN</sequence>
<gene>
    <name evidence="1" type="primary">kdsB</name>
    <name type="ordered locus">NTHI0068</name>
</gene>